<feature type="chain" id="PRO_1000048464" description="Light-independent protochlorophyllide reductase iron-sulfur ATP-binding protein">
    <location>
        <begin position="1"/>
        <end position="275"/>
    </location>
</feature>
<feature type="binding site" evidence="1">
    <location>
        <begin position="10"/>
        <end position="15"/>
    </location>
    <ligand>
        <name>ATP</name>
        <dbReference type="ChEBI" id="CHEBI:30616"/>
    </ligand>
</feature>
<feature type="binding site" evidence="1">
    <location>
        <position position="14"/>
    </location>
    <ligand>
        <name>Mg(2+)</name>
        <dbReference type="ChEBI" id="CHEBI:18420"/>
    </ligand>
</feature>
<feature type="binding site" evidence="1">
    <location>
        <position position="39"/>
    </location>
    <ligand>
        <name>ATP</name>
        <dbReference type="ChEBI" id="CHEBI:30616"/>
    </ligand>
</feature>
<feature type="binding site" evidence="1">
    <location>
        <position position="95"/>
    </location>
    <ligand>
        <name>[4Fe-4S] cluster</name>
        <dbReference type="ChEBI" id="CHEBI:49883"/>
        <note>ligand shared between dimeric partners</note>
    </ligand>
</feature>
<feature type="binding site" evidence="1">
    <location>
        <position position="129"/>
    </location>
    <ligand>
        <name>[4Fe-4S] cluster</name>
        <dbReference type="ChEBI" id="CHEBI:49883"/>
        <note>ligand shared between dimeric partners</note>
    </ligand>
</feature>
<feature type="binding site" evidence="1">
    <location>
        <begin position="180"/>
        <end position="181"/>
    </location>
    <ligand>
        <name>ATP</name>
        <dbReference type="ChEBI" id="CHEBI:30616"/>
    </ligand>
</feature>
<accession>Q7NI14</accession>
<proteinExistence type="inferred from homology"/>
<comment type="function">
    <text evidence="1">Component of the dark-operative protochlorophyllide reductase (DPOR) that uses Mg-ATP and reduced ferredoxin to reduce ring D of protochlorophyllide (Pchlide) to form chlorophyllide a (Chlide). This reaction is light-independent. The L component serves as a unique electron donor to the NB-component of the complex, and binds Mg-ATP.</text>
</comment>
<comment type="catalytic activity">
    <reaction evidence="1">
        <text>chlorophyllide a + oxidized 2[4Fe-4S]-[ferredoxin] + 2 ADP + 2 phosphate = protochlorophyllide a + reduced 2[4Fe-4S]-[ferredoxin] + 2 ATP + 2 H2O</text>
        <dbReference type="Rhea" id="RHEA:28202"/>
        <dbReference type="Rhea" id="RHEA-COMP:10002"/>
        <dbReference type="Rhea" id="RHEA-COMP:10004"/>
        <dbReference type="ChEBI" id="CHEBI:15377"/>
        <dbReference type="ChEBI" id="CHEBI:30616"/>
        <dbReference type="ChEBI" id="CHEBI:33722"/>
        <dbReference type="ChEBI" id="CHEBI:33723"/>
        <dbReference type="ChEBI" id="CHEBI:43474"/>
        <dbReference type="ChEBI" id="CHEBI:83348"/>
        <dbReference type="ChEBI" id="CHEBI:83350"/>
        <dbReference type="ChEBI" id="CHEBI:456216"/>
        <dbReference type="EC" id="1.3.7.7"/>
    </reaction>
</comment>
<comment type="cofactor">
    <cofactor evidence="1">
        <name>[4Fe-4S] cluster</name>
        <dbReference type="ChEBI" id="CHEBI:49883"/>
    </cofactor>
    <text evidence="1">Binds 1 [4Fe-4S] cluster per dimer.</text>
</comment>
<comment type="pathway">
    <text evidence="1">Porphyrin-containing compound metabolism; chlorophyll biosynthesis (light-independent).</text>
</comment>
<comment type="subunit">
    <text evidence="1">Homodimer. Protochlorophyllide reductase is composed of three subunits; ChlL, ChlN and ChlB.</text>
</comment>
<comment type="similarity">
    <text evidence="1">Belongs to the NifH/BchL/ChlL family.</text>
</comment>
<name>CHLL_GLOVI</name>
<organism>
    <name type="scientific">Gloeobacter violaceus (strain ATCC 29082 / PCC 7421)</name>
    <dbReference type="NCBI Taxonomy" id="251221"/>
    <lineage>
        <taxon>Bacteria</taxon>
        <taxon>Bacillati</taxon>
        <taxon>Cyanobacteriota</taxon>
        <taxon>Cyanophyceae</taxon>
        <taxon>Gloeobacterales</taxon>
        <taxon>Gloeobacteraceae</taxon>
        <taxon>Gloeobacter</taxon>
    </lineage>
</organism>
<dbReference type="EC" id="1.3.7.7" evidence="1"/>
<dbReference type="EMBL" id="BA000045">
    <property type="protein sequence ID" value="BAC90311.1"/>
    <property type="molecule type" value="Genomic_DNA"/>
</dbReference>
<dbReference type="RefSeq" id="NP_925316.1">
    <property type="nucleotide sequence ID" value="NC_005125.1"/>
</dbReference>
<dbReference type="RefSeq" id="WP_011142366.1">
    <property type="nucleotide sequence ID" value="NC_005125.1"/>
</dbReference>
<dbReference type="SMR" id="Q7NI14"/>
<dbReference type="STRING" id="251221.gene:10759867"/>
<dbReference type="EnsemblBacteria" id="BAC90311">
    <property type="protein sequence ID" value="BAC90311"/>
    <property type="gene ID" value="BAC90311"/>
</dbReference>
<dbReference type="KEGG" id="gvi:gll2370"/>
<dbReference type="PATRIC" id="fig|251221.4.peg.2409"/>
<dbReference type="eggNOG" id="COG1348">
    <property type="taxonomic scope" value="Bacteria"/>
</dbReference>
<dbReference type="HOGENOM" id="CLU_059373_2_0_3"/>
<dbReference type="InParanoid" id="Q7NI14"/>
<dbReference type="OrthoDB" id="9778641at2"/>
<dbReference type="PhylomeDB" id="Q7NI14"/>
<dbReference type="UniPathway" id="UPA00670"/>
<dbReference type="Proteomes" id="UP000000557">
    <property type="component" value="Chromosome"/>
</dbReference>
<dbReference type="GO" id="GO:0051539">
    <property type="term" value="F:4 iron, 4 sulfur cluster binding"/>
    <property type="evidence" value="ECO:0007669"/>
    <property type="project" value="UniProtKB-UniRule"/>
</dbReference>
<dbReference type="GO" id="GO:0005524">
    <property type="term" value="F:ATP binding"/>
    <property type="evidence" value="ECO:0007669"/>
    <property type="project" value="UniProtKB-UniRule"/>
</dbReference>
<dbReference type="GO" id="GO:0046872">
    <property type="term" value="F:metal ion binding"/>
    <property type="evidence" value="ECO:0007669"/>
    <property type="project" value="UniProtKB-KW"/>
</dbReference>
<dbReference type="GO" id="GO:0016730">
    <property type="term" value="F:oxidoreductase activity, acting on iron-sulfur proteins as donors"/>
    <property type="evidence" value="ECO:0007669"/>
    <property type="project" value="InterPro"/>
</dbReference>
<dbReference type="GO" id="GO:0016636">
    <property type="term" value="F:oxidoreductase activity, acting on the CH-CH group of donors, iron-sulfur protein as acceptor"/>
    <property type="evidence" value="ECO:0007669"/>
    <property type="project" value="UniProtKB-UniRule"/>
</dbReference>
<dbReference type="GO" id="GO:0036068">
    <property type="term" value="P:light-independent chlorophyll biosynthetic process"/>
    <property type="evidence" value="ECO:0007669"/>
    <property type="project" value="UniProtKB-UniRule"/>
</dbReference>
<dbReference type="GO" id="GO:0019685">
    <property type="term" value="P:photosynthesis, dark reaction"/>
    <property type="evidence" value="ECO:0007669"/>
    <property type="project" value="InterPro"/>
</dbReference>
<dbReference type="CDD" id="cd02032">
    <property type="entry name" value="Bchl-like"/>
    <property type="match status" value="1"/>
</dbReference>
<dbReference type="Gene3D" id="3.40.50.300">
    <property type="entry name" value="P-loop containing nucleotide triphosphate hydrolases"/>
    <property type="match status" value="1"/>
</dbReference>
<dbReference type="HAMAP" id="MF_00355">
    <property type="entry name" value="ChlL_BchL"/>
    <property type="match status" value="1"/>
</dbReference>
<dbReference type="InterPro" id="IPR030655">
    <property type="entry name" value="NifH/chlL_CS"/>
</dbReference>
<dbReference type="InterPro" id="IPR000392">
    <property type="entry name" value="NifH/frxC"/>
</dbReference>
<dbReference type="InterPro" id="IPR027417">
    <property type="entry name" value="P-loop_NTPase"/>
</dbReference>
<dbReference type="InterPro" id="IPR005971">
    <property type="entry name" value="Protochlorophyllide_ATP-bd"/>
</dbReference>
<dbReference type="NCBIfam" id="TIGR01281">
    <property type="entry name" value="DPOR_bchL"/>
    <property type="match status" value="1"/>
</dbReference>
<dbReference type="PANTHER" id="PTHR42864">
    <property type="entry name" value="LIGHT-INDEPENDENT PROTOCHLOROPHYLLIDE REDUCTASE IRON-SULFUR ATP-BINDING PROTEIN"/>
    <property type="match status" value="1"/>
</dbReference>
<dbReference type="PANTHER" id="PTHR42864:SF2">
    <property type="entry name" value="LIGHT-INDEPENDENT PROTOCHLOROPHYLLIDE REDUCTASE IRON-SULFUR ATP-BINDING PROTEIN"/>
    <property type="match status" value="1"/>
</dbReference>
<dbReference type="Pfam" id="PF00142">
    <property type="entry name" value="Fer4_NifH"/>
    <property type="match status" value="1"/>
</dbReference>
<dbReference type="PIRSF" id="PIRSF000363">
    <property type="entry name" value="Nitrogenase_iron"/>
    <property type="match status" value="1"/>
</dbReference>
<dbReference type="PRINTS" id="PR00091">
    <property type="entry name" value="NITROGNASEII"/>
</dbReference>
<dbReference type="SUPFAM" id="SSF52540">
    <property type="entry name" value="P-loop containing nucleoside triphosphate hydrolases"/>
    <property type="match status" value="1"/>
</dbReference>
<dbReference type="PROSITE" id="PS00746">
    <property type="entry name" value="NIFH_FRXC_1"/>
    <property type="match status" value="1"/>
</dbReference>
<dbReference type="PROSITE" id="PS00692">
    <property type="entry name" value="NIFH_FRXC_2"/>
    <property type="match status" value="1"/>
</dbReference>
<dbReference type="PROSITE" id="PS51026">
    <property type="entry name" value="NIFH_FRXC_3"/>
    <property type="match status" value="1"/>
</dbReference>
<protein>
    <recommendedName>
        <fullName evidence="1">Light-independent protochlorophyllide reductase iron-sulfur ATP-binding protein</fullName>
        <shortName evidence="1">DPOR subunit L</shortName>
        <shortName evidence="1">LI-POR subunit L</shortName>
        <ecNumber evidence="1">1.3.7.7</ecNumber>
    </recommendedName>
</protein>
<reference key="1">
    <citation type="journal article" date="2003" name="DNA Res.">
        <title>Complete genome structure of Gloeobacter violaceus PCC 7421, a cyanobacterium that lacks thylakoids.</title>
        <authorList>
            <person name="Nakamura Y."/>
            <person name="Kaneko T."/>
            <person name="Sato S."/>
            <person name="Mimuro M."/>
            <person name="Miyashita H."/>
            <person name="Tsuchiya T."/>
            <person name="Sasamoto S."/>
            <person name="Watanabe A."/>
            <person name="Kawashima K."/>
            <person name="Kishida Y."/>
            <person name="Kiyokawa C."/>
            <person name="Kohara M."/>
            <person name="Matsumoto M."/>
            <person name="Matsuno A."/>
            <person name="Nakazaki N."/>
            <person name="Shimpo S."/>
            <person name="Takeuchi C."/>
            <person name="Yamada M."/>
            <person name="Tabata S."/>
        </authorList>
    </citation>
    <scope>NUCLEOTIDE SEQUENCE [LARGE SCALE GENOMIC DNA]</scope>
    <source>
        <strain>ATCC 29082 / PCC 7421</strain>
    </source>
</reference>
<gene>
    <name evidence="1" type="primary">chlL</name>
    <name type="ordered locus">gll2370</name>
</gene>
<sequence>MKLAVYGKGGIGKSTTSCNISVALAKRGRRVLQIGCDPKHDSTFTLTGFLIPTIIDTLEEKDYHYEDVYAEDVIYEGYGGVHCVEAGGPPAGAGCGGYVVGETMKLLKELRAFEDHDVILFDVLGDVVCGGFAAPLNYADYCVIITDNGFDALFAANRIAASCREKARTHPLKLAGLVGNRTNKRDLIDKYVEAVPMPVLEILPLIEDIRVSRVKGKTIFEMAETDPSLEPVCQYYLNIADHLLACPEGVVPQECPDRALFELLSDFYSRTPVPA</sequence>
<evidence type="ECO:0000255" key="1">
    <source>
        <dbReference type="HAMAP-Rule" id="MF_00355"/>
    </source>
</evidence>
<keyword id="KW-0004">4Fe-4S</keyword>
<keyword id="KW-0067">ATP-binding</keyword>
<keyword id="KW-0149">Chlorophyll biosynthesis</keyword>
<keyword id="KW-0408">Iron</keyword>
<keyword id="KW-0411">Iron-sulfur</keyword>
<keyword id="KW-0460">Magnesium</keyword>
<keyword id="KW-0479">Metal-binding</keyword>
<keyword id="KW-0547">Nucleotide-binding</keyword>
<keyword id="KW-0560">Oxidoreductase</keyword>
<keyword id="KW-0602">Photosynthesis</keyword>
<keyword id="KW-1185">Reference proteome</keyword>